<protein>
    <recommendedName>
        <fullName>Lethal(2) giant larvae protein homolog 1</fullName>
        <shortName>LLGL</shortName>
    </recommendedName>
    <alternativeName>
        <fullName>Mgl-1</fullName>
    </alternativeName>
    <alternativeName>
        <fullName>Mlgl</fullName>
    </alternativeName>
</protein>
<name>L2GL1_MOUSE</name>
<accession>Q80Y17</accession>
<accession>Q61856</accession>
<accession>Q7TNV3</accession>
<accession>Q8BN92</accession>
<keyword id="KW-0966">Cell projection</keyword>
<keyword id="KW-0963">Cytoplasm</keyword>
<keyword id="KW-0206">Cytoskeleton</keyword>
<keyword id="KW-0967">Endosome</keyword>
<keyword id="KW-0268">Exocytosis</keyword>
<keyword id="KW-0333">Golgi apparatus</keyword>
<keyword id="KW-0472">Membrane</keyword>
<keyword id="KW-0597">Phosphoprotein</keyword>
<keyword id="KW-1185">Reference proteome</keyword>
<keyword id="KW-0677">Repeat</keyword>
<keyword id="KW-0853">WD repeat</keyword>
<proteinExistence type="evidence at protein level"/>
<sequence length="1036" mass="112618">MMKFRFRRQGADPQREKLKQELFAFHKTVEHGFPNQPSALAFDPELRIMAIGTRSGAVKIYGAPGVEFTGLHRDAATVTQMHFLPGQGRLLTLLDDSSLHLWEIIHHNGCAHLEEGLSFHPPSRPSFDNASFPASLTRVTVVLLVAGNTAALGTESGSIFFLDVATLALLEGQTLSPDVVLRSVPDDYRCGKALGPVESLQGHLQDPSKILIGYSRGLLVIWSQATQSVDNVFLGNQQLESLCWGRDGSSIISSHSDGSYAIWSTDTGSPPTLQPTVVTTPYGPFPCKAINKILWRSCESGDHFIIFSGGMPRASYGDRHCVSVLRAETLVTLDFTSRVIDFFTVHSTQPEDECDNPQALAVLLEEELVVLDLQTPGWPAVPAPYLAPLHSSAITCSAHVANVPSKLWARIVSAGEQQSPQPASSALSWPITGGRNLAQEPSQRGLLLTGHEDGTVRFWDASGVALRPLYKLSTAGLFQTDCEHADSLAQAVEDDWPPFRKVGCFDPYSDDPRLGIQKVALCKYTAQMVVAGTAGQVLVLELSEVPAEHAVSVANVDLLQDREGFTWKGHERLNPHTGLLPWPAGFQPRMLIQCLPPAAVTAVTLHAEWSLVAFGTSHGFGLFDYQRKSPVLARCTLHPNDSLAMEGPLSRVKSLKKSLRQSFRRIRKSRVSGKKRTPAASSKLQEANAQLAEQTCPHDLEMTPVQRRIEPRSADDSLSGVVRCLYFADTFLRDATHHGPTMWAGTNSGSVFAYALEVPAATAGGEKRPEQAVEAVLGKEVQLMHRAPVVAIAVLDGRGRPLPEPYEASRDLAQAPDMQGGHAVLIASEEQFKVFTLPKVSAKTKFKLTAHEGCRVRKVALATFASVMSEDYAETCLACLTNLGDVHVFSVPGLRPQVHYSCIRKEDISGIASCVFTRHGQGFYLISPSEFERFSLSARNITEPLCSLDISWPQNATQPRLQESPKLSQANGTRDIILAPESCEGSPSSAHSKRADTMEPPEAALSPVSIDSAASGDTMLDTTGDVTVEYVKDFLG</sequence>
<comment type="function">
    <text>Cortical cytoskeleton protein found in a complex involved in maintaining cell polarity and epithelial integrity. Involved in the regulation of mitotic spindle orientation, proliferation, differentiation and tissue organization of neuroepithelial cells. Involved in axonogenesis through RAB10 activation thereby regulating vesicular membrane trafficking toward the axonal plasma membrane.</text>
</comment>
<comment type="subunit">
    <text evidence="1">Associated with nonmuscle myosin II heavy chain. Interacts with PRKCI/aPKC, PARD6B/Par-6 and PARD6A (By similarity). Interacts with STX4A. Interacts with RAB10 (GDP-bound form); the interaction is direct and promotes RAB10 association with membranes and activation through competition with the Rab inhibitor GDI1. Interacts with DCAF1 (By similarity).</text>
</comment>
<comment type="subcellular location">
    <subcellularLocation>
        <location evidence="1">Early endosome membrane</location>
    </subcellularLocation>
    <subcellularLocation>
        <location evidence="1">Golgi apparatus</location>
        <location evidence="1">trans-Golgi network membrane</location>
    </subcellularLocation>
    <subcellularLocation>
        <location evidence="1">Golgi apparatus membrane</location>
    </subcellularLocation>
    <subcellularLocation>
        <location evidence="1">Cell projection</location>
        <location evidence="1">Axon</location>
    </subcellularLocation>
    <subcellularLocation>
        <location evidence="1">Cytoplasm</location>
        <location evidence="1">Cytoskeleton</location>
    </subcellularLocation>
    <text evidence="1">Localized to the lateral membrane during the polarization and formation cell-cell contacts. Enriched in developing axons (By similarity).</text>
</comment>
<comment type="PTM">
    <text evidence="4">Phosphorylated by PRKCI on at least one of the following Ser residues: Ser 654, Ser-658, Ser-662, Ser-669 and Ser-672. Phosphorylation is important for appropriated cell polarization.</text>
</comment>
<comment type="disruption phenotype">
    <text evidence="5">Mice exhibit disorganization and disruption of the apical junctional complex, resulting in hyper-proliferation of neuroblasts and brain dysplasia. Loss of Lgl1 in mice results in formation of neuroepithelial rosette-like structures, similar to the neuroblastic rosettes in human primitive neuroectodermal tumors. The newborn Lgl1(-/-) pups develop severe hydrocephalus and die neonatally. Due to the loss of mitotic spindle orientation, a large proportion of Lgl1(-/-) neural progenitor cells fails to exit the cell cycle and differentiate, and, instead, continues to proliferate and dies by apoptosis. Dividing Lgl1(-/-) cells are unable to asymmetrically localize the Notch inhibitor Numb, and the resulting failure of asymmetric cell divisions may be responsible for the hyperproliferation and the lack of differentiation.</text>
</comment>
<comment type="similarity">
    <text evidence="6">Belongs to the WD repeat L(2)GL family.</text>
</comment>
<organism>
    <name type="scientific">Mus musculus</name>
    <name type="common">Mouse</name>
    <dbReference type="NCBI Taxonomy" id="10090"/>
    <lineage>
        <taxon>Eukaryota</taxon>
        <taxon>Metazoa</taxon>
        <taxon>Chordata</taxon>
        <taxon>Craniata</taxon>
        <taxon>Vertebrata</taxon>
        <taxon>Euteleostomi</taxon>
        <taxon>Mammalia</taxon>
        <taxon>Eutheria</taxon>
        <taxon>Euarchontoglires</taxon>
        <taxon>Glires</taxon>
        <taxon>Rodentia</taxon>
        <taxon>Myomorpha</taxon>
        <taxon>Muroidea</taxon>
        <taxon>Muridae</taxon>
        <taxon>Murinae</taxon>
        <taxon>Mus</taxon>
        <taxon>Mus</taxon>
    </lineage>
</organism>
<dbReference type="EMBL" id="D16141">
    <property type="protein sequence ID" value="BAA03712.1"/>
    <property type="molecule type" value="mRNA"/>
</dbReference>
<dbReference type="EMBL" id="AK084386">
    <property type="protein sequence ID" value="BAC39171.1"/>
    <property type="molecule type" value="mRNA"/>
</dbReference>
<dbReference type="EMBL" id="AK159412">
    <property type="protein sequence ID" value="BAE35062.1"/>
    <property type="molecule type" value="mRNA"/>
</dbReference>
<dbReference type="EMBL" id="AL596215">
    <property type="status" value="NOT_ANNOTATED_CDS"/>
    <property type="molecule type" value="Genomic_DNA"/>
</dbReference>
<dbReference type="EMBL" id="BC050913">
    <property type="protein sequence ID" value="AAH50913.1"/>
    <property type="molecule type" value="mRNA"/>
</dbReference>
<dbReference type="EMBL" id="BC055399">
    <property type="protein sequence ID" value="AAH55399.1"/>
    <property type="molecule type" value="mRNA"/>
</dbReference>
<dbReference type="CCDS" id="CCDS48813.1"/>
<dbReference type="PIR" id="S36758">
    <property type="entry name" value="S36758"/>
</dbReference>
<dbReference type="RefSeq" id="NP_001152876.1">
    <property type="nucleotide sequence ID" value="NM_001159404.2"/>
</dbReference>
<dbReference type="RefSeq" id="NP_001152877.1">
    <property type="nucleotide sequence ID" value="NM_001159405.1"/>
</dbReference>
<dbReference type="RefSeq" id="NP_032528.1">
    <property type="nucleotide sequence ID" value="NM_008502.2"/>
</dbReference>
<dbReference type="SMR" id="Q80Y17"/>
<dbReference type="BioGRID" id="201173">
    <property type="interactions" value="14"/>
</dbReference>
<dbReference type="CORUM" id="Q80Y17"/>
<dbReference type="FunCoup" id="Q80Y17">
    <property type="interactions" value="1412"/>
</dbReference>
<dbReference type="IntAct" id="Q80Y17">
    <property type="interactions" value="1"/>
</dbReference>
<dbReference type="MINT" id="Q80Y17"/>
<dbReference type="STRING" id="10090.ENSMUSP00000060749"/>
<dbReference type="GlyGen" id="Q80Y17">
    <property type="glycosylation" value="2 sites, 2 N-linked glycans (2 sites)"/>
</dbReference>
<dbReference type="iPTMnet" id="Q80Y17"/>
<dbReference type="PhosphoSitePlus" id="Q80Y17"/>
<dbReference type="SwissPalm" id="Q80Y17"/>
<dbReference type="jPOST" id="Q80Y17"/>
<dbReference type="PaxDb" id="10090-ENSMUSP00000060749"/>
<dbReference type="PeptideAtlas" id="Q80Y17"/>
<dbReference type="ProteomicsDB" id="264902"/>
<dbReference type="Pumba" id="Q80Y17"/>
<dbReference type="Antibodypedia" id="13463">
    <property type="antibodies" value="182 antibodies from 26 providers"/>
</dbReference>
<dbReference type="DNASU" id="16897"/>
<dbReference type="Ensembl" id="ENSMUST00000108719.4">
    <property type="protein sequence ID" value="ENSMUSP00000104359.4"/>
    <property type="gene ID" value="ENSMUSG00000020536.13"/>
</dbReference>
<dbReference type="GeneID" id="16897"/>
<dbReference type="KEGG" id="mmu:16897"/>
<dbReference type="UCSC" id="uc007jge.2">
    <property type="organism name" value="mouse"/>
</dbReference>
<dbReference type="AGR" id="MGI:102682"/>
<dbReference type="CTD" id="3996"/>
<dbReference type="MGI" id="MGI:102682">
    <property type="gene designation" value="Llgl1"/>
</dbReference>
<dbReference type="VEuPathDB" id="HostDB:ENSMUSG00000020536"/>
<dbReference type="eggNOG" id="KOG1983">
    <property type="taxonomic scope" value="Eukaryota"/>
</dbReference>
<dbReference type="GeneTree" id="ENSGT00950000182906"/>
<dbReference type="HOGENOM" id="CLU_005214_0_0_1"/>
<dbReference type="InParanoid" id="Q80Y17"/>
<dbReference type="OMA" id="WRNCASG"/>
<dbReference type="OrthoDB" id="19944at2759"/>
<dbReference type="PhylomeDB" id="Q80Y17"/>
<dbReference type="TreeFam" id="TF314585"/>
<dbReference type="BioGRID-ORCS" id="16897">
    <property type="hits" value="4 hits in 82 CRISPR screens"/>
</dbReference>
<dbReference type="CD-CODE" id="CE726F99">
    <property type="entry name" value="Postsynaptic density"/>
</dbReference>
<dbReference type="ChiTaRS" id="Llgl1">
    <property type="organism name" value="mouse"/>
</dbReference>
<dbReference type="PRO" id="PR:Q80Y17"/>
<dbReference type="Proteomes" id="UP000000589">
    <property type="component" value="Chromosome 11"/>
</dbReference>
<dbReference type="RNAct" id="Q80Y17">
    <property type="molecule type" value="protein"/>
</dbReference>
<dbReference type="Bgee" id="ENSMUSG00000020536">
    <property type="expression patterns" value="Expressed in medial ganglionic eminence and 267 other cell types or tissues"/>
</dbReference>
<dbReference type="ExpressionAtlas" id="Q80Y17">
    <property type="expression patterns" value="baseline and differential"/>
</dbReference>
<dbReference type="GO" id="GO:0030424">
    <property type="term" value="C:axon"/>
    <property type="evidence" value="ECO:0007669"/>
    <property type="project" value="UniProtKB-SubCell"/>
</dbReference>
<dbReference type="GO" id="GO:0016323">
    <property type="term" value="C:basolateral plasma membrane"/>
    <property type="evidence" value="ECO:0000314"/>
    <property type="project" value="MGI"/>
</dbReference>
<dbReference type="GO" id="GO:0005737">
    <property type="term" value="C:cytoplasm"/>
    <property type="evidence" value="ECO:0000314"/>
    <property type="project" value="MGI"/>
</dbReference>
<dbReference type="GO" id="GO:0005856">
    <property type="term" value="C:cytoskeleton"/>
    <property type="evidence" value="ECO:0000314"/>
    <property type="project" value="UniProtKB"/>
</dbReference>
<dbReference type="GO" id="GO:0031901">
    <property type="term" value="C:early endosome membrane"/>
    <property type="evidence" value="ECO:0000250"/>
    <property type="project" value="UniProtKB"/>
</dbReference>
<dbReference type="GO" id="GO:0000137">
    <property type="term" value="C:Golgi cis cisterna"/>
    <property type="evidence" value="ECO:0000250"/>
    <property type="project" value="UniProtKB"/>
</dbReference>
<dbReference type="GO" id="GO:0000139">
    <property type="term" value="C:Golgi membrane"/>
    <property type="evidence" value="ECO:0007669"/>
    <property type="project" value="UniProtKB-SubCell"/>
</dbReference>
<dbReference type="GO" id="GO:0035748">
    <property type="term" value="C:myelin sheath abaxonal region"/>
    <property type="evidence" value="ECO:0000314"/>
    <property type="project" value="BHF-UCL"/>
</dbReference>
<dbReference type="GO" id="GO:0032588">
    <property type="term" value="C:trans-Golgi network membrane"/>
    <property type="evidence" value="ECO:0000250"/>
    <property type="project" value="UniProtKB"/>
</dbReference>
<dbReference type="GO" id="GO:0005096">
    <property type="term" value="F:GTPase activator activity"/>
    <property type="evidence" value="ECO:0000250"/>
    <property type="project" value="UniProtKB"/>
</dbReference>
<dbReference type="GO" id="GO:0007409">
    <property type="term" value="P:axonogenesis"/>
    <property type="evidence" value="ECO:0000250"/>
    <property type="project" value="UniProtKB"/>
</dbReference>
<dbReference type="GO" id="GO:0007420">
    <property type="term" value="P:brain development"/>
    <property type="evidence" value="ECO:0000304"/>
    <property type="project" value="UniProtKB"/>
</dbReference>
<dbReference type="GO" id="GO:0006887">
    <property type="term" value="P:exocytosis"/>
    <property type="evidence" value="ECO:0007669"/>
    <property type="project" value="UniProtKB-KW"/>
</dbReference>
<dbReference type="GO" id="GO:0006893">
    <property type="term" value="P:Golgi to plasma membrane transport"/>
    <property type="evidence" value="ECO:0000250"/>
    <property type="project" value="UniProtKB"/>
</dbReference>
<dbReference type="GO" id="GO:0035090">
    <property type="term" value="P:maintenance of apical/basal cell polarity"/>
    <property type="evidence" value="ECO:0000315"/>
    <property type="project" value="MGI"/>
</dbReference>
<dbReference type="FunFam" id="2.130.10.10:FF:001325">
    <property type="entry name" value="Lethal(2) giant larvae protein homolog 1"/>
    <property type="match status" value="1"/>
</dbReference>
<dbReference type="Gene3D" id="2.130.10.10">
    <property type="entry name" value="YVTN repeat-like/Quinoprotein amine dehydrogenase"/>
    <property type="match status" value="2"/>
</dbReference>
<dbReference type="InterPro" id="IPR000664">
    <property type="entry name" value="Lethal2_giant"/>
</dbReference>
<dbReference type="InterPro" id="IPR013905">
    <property type="entry name" value="Lgl_C_dom"/>
</dbReference>
<dbReference type="InterPro" id="IPR013577">
    <property type="entry name" value="LLGL2"/>
</dbReference>
<dbReference type="InterPro" id="IPR015943">
    <property type="entry name" value="WD40/YVTN_repeat-like_dom_sf"/>
</dbReference>
<dbReference type="InterPro" id="IPR036322">
    <property type="entry name" value="WD40_repeat_dom_sf"/>
</dbReference>
<dbReference type="InterPro" id="IPR001680">
    <property type="entry name" value="WD40_rpt"/>
</dbReference>
<dbReference type="PANTHER" id="PTHR10241">
    <property type="entry name" value="LETHAL 2 GIANT LARVAE PROTEIN"/>
    <property type="match status" value="1"/>
</dbReference>
<dbReference type="PANTHER" id="PTHR10241:SF21">
    <property type="entry name" value="LETHAL(2) GIANT LARVAE PROTEIN HOMOLOG 1"/>
    <property type="match status" value="1"/>
</dbReference>
<dbReference type="Pfam" id="PF08596">
    <property type="entry name" value="Lgl_C"/>
    <property type="match status" value="1"/>
</dbReference>
<dbReference type="Pfam" id="PF08366">
    <property type="entry name" value="LLGL"/>
    <property type="match status" value="1"/>
</dbReference>
<dbReference type="PRINTS" id="PR00962">
    <property type="entry name" value="LETHAL2GIANT"/>
</dbReference>
<dbReference type="SMART" id="SM00320">
    <property type="entry name" value="WD40"/>
    <property type="match status" value="5"/>
</dbReference>
<dbReference type="SUPFAM" id="SSF50978">
    <property type="entry name" value="WD40 repeat-like"/>
    <property type="match status" value="1"/>
</dbReference>
<dbReference type="PROSITE" id="PS00678">
    <property type="entry name" value="WD_REPEATS_1"/>
    <property type="match status" value="2"/>
</dbReference>
<dbReference type="PROSITE" id="PS50082">
    <property type="entry name" value="WD_REPEATS_2"/>
    <property type="match status" value="1"/>
</dbReference>
<evidence type="ECO:0000250" key="1"/>
<evidence type="ECO:0000250" key="2">
    <source>
        <dbReference type="UniProtKB" id="Q15334"/>
    </source>
</evidence>
<evidence type="ECO:0000256" key="3">
    <source>
        <dbReference type="SAM" id="MobiDB-lite"/>
    </source>
</evidence>
<evidence type="ECO:0000269" key="4">
    <source>
    </source>
</evidence>
<evidence type="ECO:0000269" key="5">
    <source>
    </source>
</evidence>
<evidence type="ECO:0000305" key="6"/>
<evidence type="ECO:0007744" key="7">
    <source>
    </source>
</evidence>
<evidence type="ECO:0007744" key="8">
    <source>
    </source>
</evidence>
<reference key="1">
    <citation type="journal article" date="1993" name="Nature">
        <title>A mouse homologue of the Drosophila tumour-suppressor gene l(2)gl controlled by Hox-C8 in vivo.</title>
        <authorList>
            <person name="Tomotsune D."/>
            <person name="Shoji H."/>
            <person name="Wakamatsu Y."/>
            <person name="Kondoh H."/>
            <person name="Takahashi N."/>
        </authorList>
    </citation>
    <scope>NUCLEOTIDE SEQUENCE [MRNA]</scope>
    <source>
        <strain>ICR</strain>
    </source>
</reference>
<reference key="2">
    <citation type="journal article" date="2005" name="Science">
        <title>The transcriptional landscape of the mammalian genome.</title>
        <authorList>
            <person name="Carninci P."/>
            <person name="Kasukawa T."/>
            <person name="Katayama S."/>
            <person name="Gough J."/>
            <person name="Frith M.C."/>
            <person name="Maeda N."/>
            <person name="Oyama R."/>
            <person name="Ravasi T."/>
            <person name="Lenhard B."/>
            <person name="Wells C."/>
            <person name="Kodzius R."/>
            <person name="Shimokawa K."/>
            <person name="Bajic V.B."/>
            <person name="Brenner S.E."/>
            <person name="Batalov S."/>
            <person name="Forrest A.R."/>
            <person name="Zavolan M."/>
            <person name="Davis M.J."/>
            <person name="Wilming L.G."/>
            <person name="Aidinis V."/>
            <person name="Allen J.E."/>
            <person name="Ambesi-Impiombato A."/>
            <person name="Apweiler R."/>
            <person name="Aturaliya R.N."/>
            <person name="Bailey T.L."/>
            <person name="Bansal M."/>
            <person name="Baxter L."/>
            <person name="Beisel K.W."/>
            <person name="Bersano T."/>
            <person name="Bono H."/>
            <person name="Chalk A.M."/>
            <person name="Chiu K.P."/>
            <person name="Choudhary V."/>
            <person name="Christoffels A."/>
            <person name="Clutterbuck D.R."/>
            <person name="Crowe M.L."/>
            <person name="Dalla E."/>
            <person name="Dalrymple B.P."/>
            <person name="de Bono B."/>
            <person name="Della Gatta G."/>
            <person name="di Bernardo D."/>
            <person name="Down T."/>
            <person name="Engstrom P."/>
            <person name="Fagiolini M."/>
            <person name="Faulkner G."/>
            <person name="Fletcher C.F."/>
            <person name="Fukushima T."/>
            <person name="Furuno M."/>
            <person name="Futaki S."/>
            <person name="Gariboldi M."/>
            <person name="Georgii-Hemming P."/>
            <person name="Gingeras T.R."/>
            <person name="Gojobori T."/>
            <person name="Green R.E."/>
            <person name="Gustincich S."/>
            <person name="Harbers M."/>
            <person name="Hayashi Y."/>
            <person name="Hensch T.K."/>
            <person name="Hirokawa N."/>
            <person name="Hill D."/>
            <person name="Huminiecki L."/>
            <person name="Iacono M."/>
            <person name="Ikeo K."/>
            <person name="Iwama A."/>
            <person name="Ishikawa T."/>
            <person name="Jakt M."/>
            <person name="Kanapin A."/>
            <person name="Katoh M."/>
            <person name="Kawasawa Y."/>
            <person name="Kelso J."/>
            <person name="Kitamura H."/>
            <person name="Kitano H."/>
            <person name="Kollias G."/>
            <person name="Krishnan S.P."/>
            <person name="Kruger A."/>
            <person name="Kummerfeld S.K."/>
            <person name="Kurochkin I.V."/>
            <person name="Lareau L.F."/>
            <person name="Lazarevic D."/>
            <person name="Lipovich L."/>
            <person name="Liu J."/>
            <person name="Liuni S."/>
            <person name="McWilliam S."/>
            <person name="Madan Babu M."/>
            <person name="Madera M."/>
            <person name="Marchionni L."/>
            <person name="Matsuda H."/>
            <person name="Matsuzawa S."/>
            <person name="Miki H."/>
            <person name="Mignone F."/>
            <person name="Miyake S."/>
            <person name="Morris K."/>
            <person name="Mottagui-Tabar S."/>
            <person name="Mulder N."/>
            <person name="Nakano N."/>
            <person name="Nakauchi H."/>
            <person name="Ng P."/>
            <person name="Nilsson R."/>
            <person name="Nishiguchi S."/>
            <person name="Nishikawa S."/>
            <person name="Nori F."/>
            <person name="Ohara O."/>
            <person name="Okazaki Y."/>
            <person name="Orlando V."/>
            <person name="Pang K.C."/>
            <person name="Pavan W.J."/>
            <person name="Pavesi G."/>
            <person name="Pesole G."/>
            <person name="Petrovsky N."/>
            <person name="Piazza S."/>
            <person name="Reed J."/>
            <person name="Reid J.F."/>
            <person name="Ring B.Z."/>
            <person name="Ringwald M."/>
            <person name="Rost B."/>
            <person name="Ruan Y."/>
            <person name="Salzberg S.L."/>
            <person name="Sandelin A."/>
            <person name="Schneider C."/>
            <person name="Schoenbach C."/>
            <person name="Sekiguchi K."/>
            <person name="Semple C.A."/>
            <person name="Seno S."/>
            <person name="Sessa L."/>
            <person name="Sheng Y."/>
            <person name="Shibata Y."/>
            <person name="Shimada H."/>
            <person name="Shimada K."/>
            <person name="Silva D."/>
            <person name="Sinclair B."/>
            <person name="Sperling S."/>
            <person name="Stupka E."/>
            <person name="Sugiura K."/>
            <person name="Sultana R."/>
            <person name="Takenaka Y."/>
            <person name="Taki K."/>
            <person name="Tammoja K."/>
            <person name="Tan S.L."/>
            <person name="Tang S."/>
            <person name="Taylor M.S."/>
            <person name="Tegner J."/>
            <person name="Teichmann S.A."/>
            <person name="Ueda H.R."/>
            <person name="van Nimwegen E."/>
            <person name="Verardo R."/>
            <person name="Wei C.L."/>
            <person name="Yagi K."/>
            <person name="Yamanishi H."/>
            <person name="Zabarovsky E."/>
            <person name="Zhu S."/>
            <person name="Zimmer A."/>
            <person name="Hide W."/>
            <person name="Bult C."/>
            <person name="Grimmond S.M."/>
            <person name="Teasdale R.D."/>
            <person name="Liu E.T."/>
            <person name="Brusic V."/>
            <person name="Quackenbush J."/>
            <person name="Wahlestedt C."/>
            <person name="Mattick J.S."/>
            <person name="Hume D.A."/>
            <person name="Kai C."/>
            <person name="Sasaki D."/>
            <person name="Tomaru Y."/>
            <person name="Fukuda S."/>
            <person name="Kanamori-Katayama M."/>
            <person name="Suzuki M."/>
            <person name="Aoki J."/>
            <person name="Arakawa T."/>
            <person name="Iida J."/>
            <person name="Imamura K."/>
            <person name="Itoh M."/>
            <person name="Kato T."/>
            <person name="Kawaji H."/>
            <person name="Kawagashira N."/>
            <person name="Kawashima T."/>
            <person name="Kojima M."/>
            <person name="Kondo S."/>
            <person name="Konno H."/>
            <person name="Nakano K."/>
            <person name="Ninomiya N."/>
            <person name="Nishio T."/>
            <person name="Okada M."/>
            <person name="Plessy C."/>
            <person name="Shibata K."/>
            <person name="Shiraki T."/>
            <person name="Suzuki S."/>
            <person name="Tagami M."/>
            <person name="Waki K."/>
            <person name="Watahiki A."/>
            <person name="Okamura-Oho Y."/>
            <person name="Suzuki H."/>
            <person name="Kawai J."/>
            <person name="Hayashizaki Y."/>
        </authorList>
    </citation>
    <scope>NUCLEOTIDE SEQUENCE [LARGE SCALE MRNA]</scope>
    <source>
        <strain>C57BL/6J</strain>
        <tissue>Eye</tissue>
        <tissue>Osteoclast</tissue>
    </source>
</reference>
<reference key="3">
    <citation type="journal article" date="2009" name="PLoS Biol.">
        <title>Lineage-specific biology revealed by a finished genome assembly of the mouse.</title>
        <authorList>
            <person name="Church D.M."/>
            <person name="Goodstadt L."/>
            <person name="Hillier L.W."/>
            <person name="Zody M.C."/>
            <person name="Goldstein S."/>
            <person name="She X."/>
            <person name="Bult C.J."/>
            <person name="Agarwala R."/>
            <person name="Cherry J.L."/>
            <person name="DiCuccio M."/>
            <person name="Hlavina W."/>
            <person name="Kapustin Y."/>
            <person name="Meric P."/>
            <person name="Maglott D."/>
            <person name="Birtle Z."/>
            <person name="Marques A.C."/>
            <person name="Graves T."/>
            <person name="Zhou S."/>
            <person name="Teague B."/>
            <person name="Potamousis K."/>
            <person name="Churas C."/>
            <person name="Place M."/>
            <person name="Herschleb J."/>
            <person name="Runnheim R."/>
            <person name="Forrest D."/>
            <person name="Amos-Landgraf J."/>
            <person name="Schwartz D.C."/>
            <person name="Cheng Z."/>
            <person name="Lindblad-Toh K."/>
            <person name="Eichler E.E."/>
            <person name="Ponting C.P."/>
        </authorList>
    </citation>
    <scope>NUCLEOTIDE SEQUENCE [LARGE SCALE GENOMIC DNA]</scope>
    <source>
        <strain>C57BL/6J</strain>
    </source>
</reference>
<reference key="4">
    <citation type="journal article" date="2004" name="Genome Res.">
        <title>The status, quality, and expansion of the NIH full-length cDNA project: the Mammalian Gene Collection (MGC).</title>
        <authorList>
            <consortium name="The MGC Project Team"/>
        </authorList>
    </citation>
    <scope>NUCLEOTIDE SEQUENCE [LARGE SCALE MRNA]</scope>
    <source>
        <strain>C57BL/6J</strain>
        <tissue>Brain</tissue>
        <tissue>Olfactory epithelium</tissue>
    </source>
</reference>
<reference key="5">
    <citation type="journal article" date="2003" name="Nat. Cell Biol.">
        <title>A polarity complex of mPar-6 and atypical PKC binds, phosphorylates and regulates mammalian Lgl.</title>
        <authorList>
            <person name="Plant P.J."/>
            <person name="Fawcett J.P."/>
            <person name="Lin D.C."/>
            <person name="Holdorf A.D."/>
            <person name="Binns K."/>
            <person name="Kulkarni S."/>
            <person name="Pawson T."/>
        </authorList>
    </citation>
    <scope>INTERACTION WITH PARD6A</scope>
    <scope>PHOSPHORYLATION</scope>
</reference>
<reference key="6">
    <citation type="journal article" date="2002" name="Mol. Biol. Cell">
        <title>Mammalian homolog of Drosophila tumor suppressor lethal (2) giant larvae interacts with basolateral exocytic machinery in Madin-Darby canine kidney cells.</title>
        <authorList>
            <person name="Musch A."/>
            <person name="Cohen D."/>
            <person name="Yeaman C."/>
            <person name="Nelson W.J."/>
            <person name="Rodriguez-Boulan E."/>
            <person name="Brennwald P.J."/>
        </authorList>
    </citation>
    <scope>INTERACTION WITH STX4A</scope>
</reference>
<reference key="7">
    <citation type="journal article" date="2004" name="Genes Dev.">
        <title>Loss of cell polarity causes severe brain dysplasia in Lgl1 knockout mice.</title>
        <authorList>
            <person name="Klezovitch O."/>
            <person name="Fernandez T.E."/>
            <person name="Tapscott S.J."/>
            <person name="Vasioukhin V."/>
        </authorList>
    </citation>
    <scope>DISRUPTION PHENOTYPE</scope>
</reference>
<reference key="8">
    <citation type="journal article" date="2007" name="Science">
        <title>ATM and ATR substrate analysis reveals extensive protein networks responsive to DNA damage.</title>
        <authorList>
            <person name="Matsuoka S."/>
            <person name="Ballif B.A."/>
            <person name="Smogorzewska A."/>
            <person name="McDonald E.R. III"/>
            <person name="Hurov K.E."/>
            <person name="Luo J."/>
            <person name="Bakalarski C.E."/>
            <person name="Zhao Z."/>
            <person name="Solimini N."/>
            <person name="Lerenthal Y."/>
            <person name="Shiloh Y."/>
            <person name="Gygi S.P."/>
            <person name="Elledge S.J."/>
        </authorList>
    </citation>
    <scope>PHOSPHORYLATION [LARGE SCALE ANALYSIS] AT THR-957</scope>
    <scope>IDENTIFICATION BY MASS SPECTROMETRY [LARGE SCALE ANALYSIS]</scope>
    <source>
        <tissue>Embryonic fibroblast</tissue>
    </source>
</reference>
<reference key="9">
    <citation type="journal article" date="2009" name="Immunity">
        <title>The phagosomal proteome in interferon-gamma-activated macrophages.</title>
        <authorList>
            <person name="Trost M."/>
            <person name="English L."/>
            <person name="Lemieux S."/>
            <person name="Courcelles M."/>
            <person name="Desjardins M."/>
            <person name="Thibault P."/>
        </authorList>
    </citation>
    <scope>IDENTIFICATION BY MASS SPECTROMETRY [LARGE SCALE ANALYSIS]</scope>
</reference>
<reference key="10">
    <citation type="journal article" date="2010" name="Cell">
        <title>A tissue-specific atlas of mouse protein phosphorylation and expression.</title>
        <authorList>
            <person name="Huttlin E.L."/>
            <person name="Jedrychowski M.P."/>
            <person name="Elias J.E."/>
            <person name="Goswami T."/>
            <person name="Rad R."/>
            <person name="Beausoleil S.A."/>
            <person name="Villen J."/>
            <person name="Haas W."/>
            <person name="Sowa M.E."/>
            <person name="Gygi S.P."/>
        </authorList>
    </citation>
    <scope>PHOSPHORYLATION [LARGE SCALE ANALYSIS] AT SER-964; SER-982 AND SER-989</scope>
    <scope>IDENTIFICATION BY MASS SPECTROMETRY [LARGE SCALE ANALYSIS]</scope>
    <source>
        <tissue>Brain</tissue>
        <tissue>Brown adipose tissue</tissue>
        <tissue>Heart</tissue>
        <tissue>Kidney</tissue>
        <tissue>Lung</tissue>
        <tissue>Testis</tissue>
    </source>
</reference>
<feature type="chain" id="PRO_0000232726" description="Lethal(2) giant larvae protein homolog 1">
    <location>
        <begin position="1"/>
        <end position="1036"/>
    </location>
</feature>
<feature type="repeat" description="WD 1">
    <location>
        <begin position="38"/>
        <end position="71"/>
    </location>
</feature>
<feature type="repeat" description="WD 2">
    <location>
        <begin position="78"/>
        <end position="119"/>
    </location>
</feature>
<feature type="repeat" description="WD 3">
    <location>
        <begin position="139"/>
        <end position="175"/>
    </location>
</feature>
<feature type="repeat" description="WD 4">
    <location>
        <begin position="199"/>
        <end position="233"/>
    </location>
</feature>
<feature type="repeat" description="WD 5">
    <location>
        <begin position="239"/>
        <end position="271"/>
    </location>
</feature>
<feature type="repeat" description="WD 6">
    <location>
        <begin position="289"/>
        <end position="331"/>
    </location>
</feature>
<feature type="repeat" description="WD 7">
    <location>
        <begin position="339"/>
        <end position="373"/>
    </location>
</feature>
<feature type="repeat" description="WD 8">
    <location>
        <begin position="395"/>
        <end position="473"/>
    </location>
</feature>
<feature type="repeat" description="WD 9">
    <location>
        <begin position="517"/>
        <end position="592"/>
    </location>
</feature>
<feature type="repeat" description="WD 10">
    <location>
        <begin position="601"/>
        <end position="662"/>
    </location>
</feature>
<feature type="repeat" description="WD 11">
    <location>
        <begin position="722"/>
        <end position="782"/>
    </location>
</feature>
<feature type="repeat" description="WD 12">
    <location>
        <begin position="791"/>
        <end position="843"/>
    </location>
</feature>
<feature type="repeat" description="WD 13">
    <location>
        <begin position="848"/>
        <end position="901"/>
    </location>
</feature>
<feature type="repeat" description="WD 14">
    <location>
        <begin position="915"/>
        <end position="938"/>
    </location>
</feature>
<feature type="region of interest" description="Disordered" evidence="3">
    <location>
        <begin position="667"/>
        <end position="688"/>
    </location>
</feature>
<feature type="region of interest" description="Disordered" evidence="3">
    <location>
        <begin position="980"/>
        <end position="1002"/>
    </location>
</feature>
<feature type="compositionally biased region" description="Basic residues" evidence="3">
    <location>
        <begin position="667"/>
        <end position="677"/>
    </location>
</feature>
<feature type="compositionally biased region" description="Polar residues" evidence="3">
    <location>
        <begin position="679"/>
        <end position="688"/>
    </location>
</feature>
<feature type="modified residue" description="Phosphoserine" evidence="2">
    <location>
        <position position="662"/>
    </location>
</feature>
<feature type="modified residue" description="Phosphothreonine" evidence="7">
    <location>
        <position position="957"/>
    </location>
</feature>
<feature type="modified residue" description="Phosphoserine" evidence="8">
    <location>
        <position position="964"/>
    </location>
</feature>
<feature type="modified residue" description="Phosphoserine" evidence="8">
    <location>
        <position position="982"/>
    </location>
</feature>
<feature type="modified residue" description="Phosphoserine" evidence="8">
    <location>
        <position position="989"/>
    </location>
</feature>
<feature type="sequence conflict" description="In Ref. 2; BAC39171." evidence="6" ref="2">
    <original>C</original>
    <variation>F</variation>
    <location>
        <position position="321"/>
    </location>
</feature>
<feature type="sequence conflict" description="In Ref. 1; BAA03712." evidence="6" ref="1">
    <location>
        <begin position="684"/>
        <end position="685"/>
    </location>
</feature>
<feature type="sequence conflict" description="In Ref. 4; AAH55399." evidence="6" ref="4">
    <original>G</original>
    <variation>GSPEDSEKNLRNLEADDACRAYTLLIK</variation>
    <location>
        <position position="1036"/>
    </location>
</feature>
<gene>
    <name type="primary">Llgl1</name>
    <name type="synonym">Llglh</name>
</gene>